<evidence type="ECO:0000250" key="1">
    <source>
        <dbReference type="UniProtKB" id="Q2M2T2"/>
    </source>
</evidence>
<evidence type="ECO:0000269" key="2">
    <source>
    </source>
</evidence>
<evidence type="ECO:0000269" key="3">
    <source>
    </source>
</evidence>
<evidence type="ECO:0000269" key="4">
    <source>
    </source>
</evidence>
<evidence type="ECO:0000305" key="5"/>
<evidence type="ECO:0000312" key="6">
    <source>
        <dbReference type="MGI" id="MGI:1921072"/>
    </source>
</evidence>
<evidence type="ECO:0007744" key="7">
    <source>
        <dbReference type="PDB" id="8I7O"/>
    </source>
</evidence>
<evidence type="ECO:0007744" key="8">
    <source>
        <dbReference type="PDB" id="8I7R"/>
    </source>
</evidence>
<evidence type="ECO:0007744" key="9">
    <source>
        <dbReference type="PDB" id="8IYJ"/>
    </source>
</evidence>
<evidence type="ECO:0007744" key="10">
    <source>
        <dbReference type="PDB" id="8TO0"/>
    </source>
</evidence>
<gene>
    <name evidence="6" type="primary">Tektip1</name>
</gene>
<organism>
    <name type="scientific">Mus musculus</name>
    <name type="common">Mouse</name>
    <dbReference type="NCBI Taxonomy" id="10090"/>
    <lineage>
        <taxon>Eukaryota</taxon>
        <taxon>Metazoa</taxon>
        <taxon>Chordata</taxon>
        <taxon>Craniata</taxon>
        <taxon>Vertebrata</taxon>
        <taxon>Euteleostomi</taxon>
        <taxon>Mammalia</taxon>
        <taxon>Eutheria</taxon>
        <taxon>Euarchontoglires</taxon>
        <taxon>Glires</taxon>
        <taxon>Rodentia</taxon>
        <taxon>Myomorpha</taxon>
        <taxon>Muroidea</taxon>
        <taxon>Muridae</taxon>
        <taxon>Murinae</taxon>
        <taxon>Mus</taxon>
        <taxon>Mus</taxon>
    </lineage>
</organism>
<name>TKTI1_MOUSE</name>
<feature type="chain" id="PRO_0000332197" description="Tektin bundle-interacting protein 1">
    <location>
        <begin position="1"/>
        <end position="206"/>
    </location>
</feature>
<feature type="sequence conflict" description="In Ref. 1; BAB29709." evidence="5" ref="1">
    <original>P</original>
    <variation>S</variation>
    <location>
        <position position="161"/>
    </location>
</feature>
<sequence>MENVRREATRPSVPSGTLELYFPDHLYRNDYVSLEGPRWAPAIKQAVRWKFTPMGRDAAGQVWFTGLTNSEPGDAWYKLPRALDTPYREAHTRWHGCFQSRQRGLPPAYTQHLREMAFWDPAITAQYLNSGPRWGCMQWRDRQIRGKEFVVTRNQFGAKLPWRSDYVPLLSLPQRPRFTAQDFRQRGLQRPCPAIGQPPPAFTPAL</sequence>
<dbReference type="EMBL" id="AK015088">
    <property type="protein sequence ID" value="BAB29709.1"/>
    <property type="molecule type" value="mRNA"/>
</dbReference>
<dbReference type="EMBL" id="BC139256">
    <property type="protein sequence ID" value="AAI39257.1"/>
    <property type="molecule type" value="mRNA"/>
</dbReference>
<dbReference type="EMBL" id="BC145960">
    <property type="protein sequence ID" value="AAI45961.1"/>
    <property type="molecule type" value="mRNA"/>
</dbReference>
<dbReference type="CCDS" id="CCDS24056.1"/>
<dbReference type="RefSeq" id="NP_001014836.2">
    <property type="nucleotide sequence ID" value="NM_001014836.3"/>
</dbReference>
<dbReference type="PDB" id="8I7O">
    <property type="method" value="EM"/>
    <property type="resolution" value="4.50 A"/>
    <property type="chains" value="E2/E3=1-206"/>
</dbReference>
<dbReference type="PDB" id="8I7R">
    <property type="method" value="EM"/>
    <property type="resolution" value="6.50 A"/>
    <property type="chains" value="E1/E2/E3/E4=1-206"/>
</dbReference>
<dbReference type="PDB" id="8IYJ">
    <property type="method" value="EM"/>
    <property type="resolution" value="3.50 A"/>
    <property type="chains" value="Q1/Q2/Q3/Q4/Q5=1-206"/>
</dbReference>
<dbReference type="PDB" id="8TO0">
    <property type="method" value="EM"/>
    <property type="resolution" value="7.70 A"/>
    <property type="chains" value="A1/A2/A3/Az=1-206"/>
</dbReference>
<dbReference type="PDBsum" id="8I7O"/>
<dbReference type="PDBsum" id="8I7R"/>
<dbReference type="PDBsum" id="8IYJ"/>
<dbReference type="PDBsum" id="8TO0"/>
<dbReference type="EMDB" id="EMD-35229"/>
<dbReference type="EMDB" id="EMD-35230"/>
<dbReference type="EMDB" id="EMD-35823"/>
<dbReference type="EMDB" id="EMD-41431"/>
<dbReference type="SMR" id="A6H6Q4"/>
<dbReference type="BioGRID" id="240634">
    <property type="interactions" value="1"/>
</dbReference>
<dbReference type="STRING" id="10090.ENSMUSP00000020456"/>
<dbReference type="PhosphoSitePlus" id="A6H6Q4"/>
<dbReference type="PaxDb" id="10090-ENSMUSP00000020456"/>
<dbReference type="Antibodypedia" id="63437">
    <property type="antibodies" value="5 antibodies from 5 providers"/>
</dbReference>
<dbReference type="Ensembl" id="ENSMUST00000020456.5">
    <property type="protein sequence ID" value="ENSMUSP00000020456.5"/>
    <property type="gene ID" value="ENSMUSG00000020234.11"/>
</dbReference>
<dbReference type="GeneID" id="432479"/>
<dbReference type="KEGG" id="mmu:432479"/>
<dbReference type="UCSC" id="uc007ghq.2">
    <property type="organism name" value="mouse"/>
</dbReference>
<dbReference type="AGR" id="MGI:1921072"/>
<dbReference type="CTD" id="100128569"/>
<dbReference type="MGI" id="MGI:1921072">
    <property type="gene designation" value="Tektip1"/>
</dbReference>
<dbReference type="VEuPathDB" id="HostDB:ENSMUSG00000020234"/>
<dbReference type="eggNOG" id="ENOG502S0K8">
    <property type="taxonomic scope" value="Eukaryota"/>
</dbReference>
<dbReference type="GeneTree" id="ENSGT00390000004282"/>
<dbReference type="HOGENOM" id="CLU_108079_0_0_1"/>
<dbReference type="InParanoid" id="A6H6Q4"/>
<dbReference type="OMA" id="EAWYNLP"/>
<dbReference type="OrthoDB" id="9895442at2759"/>
<dbReference type="TreeFam" id="TF336002"/>
<dbReference type="BioGRID-ORCS" id="432479">
    <property type="hits" value="2 hits in 44 CRISPR screens"/>
</dbReference>
<dbReference type="PRO" id="PR:A6H6Q4"/>
<dbReference type="Proteomes" id="UP000000589">
    <property type="component" value="Chromosome 10"/>
</dbReference>
<dbReference type="RNAct" id="A6H6Q4">
    <property type="molecule type" value="protein"/>
</dbReference>
<dbReference type="Bgee" id="ENSMUSG00000020234">
    <property type="expression patterns" value="Expressed in spermatid and 42 other cell types or tissues"/>
</dbReference>
<dbReference type="ExpressionAtlas" id="A6H6Q4">
    <property type="expression patterns" value="baseline and differential"/>
</dbReference>
<dbReference type="GO" id="GO:0160111">
    <property type="term" value="C:axonemal A tubule inner sheath"/>
    <property type="evidence" value="ECO:0000314"/>
    <property type="project" value="UniProtKB"/>
</dbReference>
<dbReference type="GO" id="GO:0005879">
    <property type="term" value="C:axonemal microtubule"/>
    <property type="evidence" value="ECO:0000250"/>
    <property type="project" value="UniProtKB"/>
</dbReference>
<dbReference type="GO" id="GO:0036126">
    <property type="term" value="C:sperm flagellum"/>
    <property type="evidence" value="ECO:0000314"/>
    <property type="project" value="UniProtKB"/>
</dbReference>
<dbReference type="GO" id="GO:0030317">
    <property type="term" value="P:flagellated sperm motility"/>
    <property type="evidence" value="ECO:0000314"/>
    <property type="project" value="UniProtKB"/>
</dbReference>
<dbReference type="InterPro" id="IPR029203">
    <property type="entry name" value="TKTI1"/>
</dbReference>
<dbReference type="PANTHER" id="PTHR31254">
    <property type="entry name" value="HYPOTHETICAL PROTEIN LOC690617"/>
    <property type="match status" value="1"/>
</dbReference>
<dbReference type="PANTHER" id="PTHR31254:SF1">
    <property type="entry name" value="TEKTIN BUNDLE-INTERACTING PROTEIN 1"/>
    <property type="match status" value="1"/>
</dbReference>
<dbReference type="Pfam" id="PF15041">
    <property type="entry name" value="TKTI1"/>
    <property type="match status" value="1"/>
</dbReference>
<proteinExistence type="evidence at protein level"/>
<reference key="1">
    <citation type="journal article" date="2005" name="Science">
        <title>The transcriptional landscape of the mammalian genome.</title>
        <authorList>
            <person name="Carninci P."/>
            <person name="Kasukawa T."/>
            <person name="Katayama S."/>
            <person name="Gough J."/>
            <person name="Frith M.C."/>
            <person name="Maeda N."/>
            <person name="Oyama R."/>
            <person name="Ravasi T."/>
            <person name="Lenhard B."/>
            <person name="Wells C."/>
            <person name="Kodzius R."/>
            <person name="Shimokawa K."/>
            <person name="Bajic V.B."/>
            <person name="Brenner S.E."/>
            <person name="Batalov S."/>
            <person name="Forrest A.R."/>
            <person name="Zavolan M."/>
            <person name="Davis M.J."/>
            <person name="Wilming L.G."/>
            <person name="Aidinis V."/>
            <person name="Allen J.E."/>
            <person name="Ambesi-Impiombato A."/>
            <person name="Apweiler R."/>
            <person name="Aturaliya R.N."/>
            <person name="Bailey T.L."/>
            <person name="Bansal M."/>
            <person name="Baxter L."/>
            <person name="Beisel K.W."/>
            <person name="Bersano T."/>
            <person name="Bono H."/>
            <person name="Chalk A.M."/>
            <person name="Chiu K.P."/>
            <person name="Choudhary V."/>
            <person name="Christoffels A."/>
            <person name="Clutterbuck D.R."/>
            <person name="Crowe M.L."/>
            <person name="Dalla E."/>
            <person name="Dalrymple B.P."/>
            <person name="de Bono B."/>
            <person name="Della Gatta G."/>
            <person name="di Bernardo D."/>
            <person name="Down T."/>
            <person name="Engstrom P."/>
            <person name="Fagiolini M."/>
            <person name="Faulkner G."/>
            <person name="Fletcher C.F."/>
            <person name="Fukushima T."/>
            <person name="Furuno M."/>
            <person name="Futaki S."/>
            <person name="Gariboldi M."/>
            <person name="Georgii-Hemming P."/>
            <person name="Gingeras T.R."/>
            <person name="Gojobori T."/>
            <person name="Green R.E."/>
            <person name="Gustincich S."/>
            <person name="Harbers M."/>
            <person name="Hayashi Y."/>
            <person name="Hensch T.K."/>
            <person name="Hirokawa N."/>
            <person name="Hill D."/>
            <person name="Huminiecki L."/>
            <person name="Iacono M."/>
            <person name="Ikeo K."/>
            <person name="Iwama A."/>
            <person name="Ishikawa T."/>
            <person name="Jakt M."/>
            <person name="Kanapin A."/>
            <person name="Katoh M."/>
            <person name="Kawasawa Y."/>
            <person name="Kelso J."/>
            <person name="Kitamura H."/>
            <person name="Kitano H."/>
            <person name="Kollias G."/>
            <person name="Krishnan S.P."/>
            <person name="Kruger A."/>
            <person name="Kummerfeld S.K."/>
            <person name="Kurochkin I.V."/>
            <person name="Lareau L.F."/>
            <person name="Lazarevic D."/>
            <person name="Lipovich L."/>
            <person name="Liu J."/>
            <person name="Liuni S."/>
            <person name="McWilliam S."/>
            <person name="Madan Babu M."/>
            <person name="Madera M."/>
            <person name="Marchionni L."/>
            <person name="Matsuda H."/>
            <person name="Matsuzawa S."/>
            <person name="Miki H."/>
            <person name="Mignone F."/>
            <person name="Miyake S."/>
            <person name="Morris K."/>
            <person name="Mottagui-Tabar S."/>
            <person name="Mulder N."/>
            <person name="Nakano N."/>
            <person name="Nakauchi H."/>
            <person name="Ng P."/>
            <person name="Nilsson R."/>
            <person name="Nishiguchi S."/>
            <person name="Nishikawa S."/>
            <person name="Nori F."/>
            <person name="Ohara O."/>
            <person name="Okazaki Y."/>
            <person name="Orlando V."/>
            <person name="Pang K.C."/>
            <person name="Pavan W.J."/>
            <person name="Pavesi G."/>
            <person name="Pesole G."/>
            <person name="Petrovsky N."/>
            <person name="Piazza S."/>
            <person name="Reed J."/>
            <person name="Reid J.F."/>
            <person name="Ring B.Z."/>
            <person name="Ringwald M."/>
            <person name="Rost B."/>
            <person name="Ruan Y."/>
            <person name="Salzberg S.L."/>
            <person name="Sandelin A."/>
            <person name="Schneider C."/>
            <person name="Schoenbach C."/>
            <person name="Sekiguchi K."/>
            <person name="Semple C.A."/>
            <person name="Seno S."/>
            <person name="Sessa L."/>
            <person name="Sheng Y."/>
            <person name="Shibata Y."/>
            <person name="Shimada H."/>
            <person name="Shimada K."/>
            <person name="Silva D."/>
            <person name="Sinclair B."/>
            <person name="Sperling S."/>
            <person name="Stupka E."/>
            <person name="Sugiura K."/>
            <person name="Sultana R."/>
            <person name="Takenaka Y."/>
            <person name="Taki K."/>
            <person name="Tammoja K."/>
            <person name="Tan S.L."/>
            <person name="Tang S."/>
            <person name="Taylor M.S."/>
            <person name="Tegner J."/>
            <person name="Teichmann S.A."/>
            <person name="Ueda H.R."/>
            <person name="van Nimwegen E."/>
            <person name="Verardo R."/>
            <person name="Wei C.L."/>
            <person name="Yagi K."/>
            <person name="Yamanishi H."/>
            <person name="Zabarovsky E."/>
            <person name="Zhu S."/>
            <person name="Zimmer A."/>
            <person name="Hide W."/>
            <person name="Bult C."/>
            <person name="Grimmond S.M."/>
            <person name="Teasdale R.D."/>
            <person name="Liu E.T."/>
            <person name="Brusic V."/>
            <person name="Quackenbush J."/>
            <person name="Wahlestedt C."/>
            <person name="Mattick J.S."/>
            <person name="Hume D.A."/>
            <person name="Kai C."/>
            <person name="Sasaki D."/>
            <person name="Tomaru Y."/>
            <person name="Fukuda S."/>
            <person name="Kanamori-Katayama M."/>
            <person name="Suzuki M."/>
            <person name="Aoki J."/>
            <person name="Arakawa T."/>
            <person name="Iida J."/>
            <person name="Imamura K."/>
            <person name="Itoh M."/>
            <person name="Kato T."/>
            <person name="Kawaji H."/>
            <person name="Kawagashira N."/>
            <person name="Kawashima T."/>
            <person name="Kojima M."/>
            <person name="Kondo S."/>
            <person name="Konno H."/>
            <person name="Nakano K."/>
            <person name="Ninomiya N."/>
            <person name="Nishio T."/>
            <person name="Okada M."/>
            <person name="Plessy C."/>
            <person name="Shibata K."/>
            <person name="Shiraki T."/>
            <person name="Suzuki S."/>
            <person name="Tagami M."/>
            <person name="Waki K."/>
            <person name="Watahiki A."/>
            <person name="Okamura-Oho Y."/>
            <person name="Suzuki H."/>
            <person name="Kawai J."/>
            <person name="Hayashizaki Y."/>
        </authorList>
    </citation>
    <scope>NUCLEOTIDE SEQUENCE [LARGE SCALE MRNA]</scope>
    <source>
        <strain>C57BL/6J</strain>
        <tissue>Testis</tissue>
    </source>
</reference>
<reference key="2">
    <citation type="journal article" date="2004" name="Genome Res.">
        <title>The status, quality, and expansion of the NIH full-length cDNA project: the Mammalian Gene Collection (MGC).</title>
        <authorList>
            <consortium name="The MGC Project Team"/>
        </authorList>
    </citation>
    <scope>NUCLEOTIDE SEQUENCE [LARGE SCALE MRNA]</scope>
    <source>
        <tissue>Brain</tissue>
    </source>
</reference>
<reference evidence="9" key="3">
    <citation type="journal article" date="2023" name="Cell">
        <title>Structures of sperm flagellar doublet microtubules expand the genetic spectrum of male infertility.</title>
        <authorList>
            <person name="Zhou L."/>
            <person name="Liu H."/>
            <person name="Liu S."/>
            <person name="Yang X."/>
            <person name="Dong Y."/>
            <person name="Pan Y."/>
            <person name="Xiao Z."/>
            <person name="Zheng B."/>
            <person name="Sun Y."/>
            <person name="Huang P."/>
            <person name="Zhang X."/>
            <person name="Hu J."/>
            <person name="Sun R."/>
            <person name="Feng S."/>
            <person name="Zhu Y."/>
            <person name="Liu M."/>
            <person name="Gui M."/>
            <person name="Wu J."/>
        </authorList>
    </citation>
    <scope>STRUCTURE BY ELECTRON MICROSCOPY (3.50 ANGSTROMS) OF SPERM FLAGELLAR DOUBLET MICROTUBULES</scope>
    <scope>FUNCTION</scope>
    <scope>SUBCELLULAR LOCATION</scope>
    <scope>SUBUNIT</scope>
</reference>
<reference evidence="10" key="4">
    <citation type="journal article" date="2023" name="Cell">
        <title>De novo protein identification in mammalian sperm using in situ cryoelectron tomography and AlphaFold2 docking.</title>
        <authorList>
            <person name="Chen Z."/>
            <person name="Shiozaki M."/>
            <person name="Haas K.M."/>
            <person name="Skinner W.M."/>
            <person name="Zhao S."/>
            <person name="Guo C."/>
            <person name="Polacco B.J."/>
            <person name="Yu Z."/>
            <person name="Krogan N.J."/>
            <person name="Lishko P.V."/>
            <person name="Kaake R.M."/>
            <person name="Vale R.D."/>
            <person name="Agard D.A."/>
        </authorList>
    </citation>
    <scope>STRUCTURE BY ELECTRON MICROSCOPY (7.70 ANGSTROMS) OF SPERM FLAGELLAR DOUBLET MICROTUBULES</scope>
    <scope>FUNCTION</scope>
    <scope>SUBCELLULAR LOCATION</scope>
    <scope>SUBUNIT</scope>
</reference>
<reference evidence="7 8" key="5">
    <citation type="journal article" date="2023" name="Cell Discov.">
        <title>In-cell structural insight into the stability of sperm microtubule doublet.</title>
        <authorList>
            <person name="Tai L."/>
            <person name="Yin G."/>
            <person name="Huang X."/>
            <person name="Sun F."/>
            <person name="Zhu Y."/>
        </authorList>
    </citation>
    <scope>STRUCTURE BY ELECTRON MICROSCOPY (4.50 ANGSTROMS)</scope>
    <scope>FUNCTION</scope>
    <scope>SUBUNIT</scope>
    <scope>SUBCELLULAR LOCATION</scope>
</reference>
<accession>A6H6Q4</accession>
<accession>B9EI87</accession>
<accession>Q9D5N6</accession>
<protein>
    <recommendedName>
        <fullName evidence="6">Tektin bundle-interacting protein 1</fullName>
    </recommendedName>
</protein>
<comment type="function">
    <text evidence="2 3 4">Microtubule inner protein (MIP) part of the dynein-decorated doublet microtubules (DMTs) in cilia axoneme, which is required for motile cilia beating (PubMed:37295417, PubMed:37865089, PubMed:37989994). Located at the center of the tektin bundle where may function to recruit tektins or stabilize the bundle (PubMed:37295417, PubMed:37865089, PubMed:37989994).</text>
</comment>
<comment type="subunit">
    <text evidence="2 3 4">Microtubule inner protein component of sperm flagellar doublet microtubules.</text>
</comment>
<comment type="subcellular location">
    <subcellularLocation>
        <location evidence="1">Cytoplasm</location>
        <location evidence="1">Cytoskeleton</location>
        <location evidence="1">Cilium axoneme</location>
    </subcellularLocation>
    <subcellularLocation>
        <location evidence="2 3 4">Cytoplasm</location>
        <location evidence="2 3 4">Cytoskeleton</location>
        <location evidence="2 3 4">Flagellum axoneme</location>
    </subcellularLocation>
</comment>
<keyword id="KW-0002">3D-structure</keyword>
<keyword id="KW-0966">Cell projection</keyword>
<keyword id="KW-0969">Cilium</keyword>
<keyword id="KW-0963">Cytoplasm</keyword>
<keyword id="KW-0206">Cytoskeleton</keyword>
<keyword id="KW-0282">Flagellum</keyword>
<keyword id="KW-1185">Reference proteome</keyword>